<gene>
    <name evidence="1" type="primary">MDM12</name>
    <name type="ordered locus">ACL013C</name>
</gene>
<protein>
    <recommendedName>
        <fullName evidence="1">Mitochondrial distribution and morphology protein 12</fullName>
    </recommendedName>
    <alternativeName>
        <fullName evidence="1">Mitochondrial inheritance component MDM12</fullName>
    </alternativeName>
</protein>
<comment type="function">
    <text evidence="1">Component of the ERMES/MDM complex, which serves as a molecular tether to connect the endoplasmic reticulum (ER) and mitochondria. Components of this complex are involved in the control of mitochondrial shape and protein biogenesis, and function in nonvesicular lipid trafficking between the ER and mitochondria. MDM12 is required for the interaction of the ER-resident membrane protein MMM1 and the outer mitochondrial membrane-resident beta-barrel protein MDM10. The MDM12-MMM1 subcomplex functions in the major beta-barrel assembly pathway that is responsible for biogenesis of all mitochondrial outer membrane beta-barrel proteins, and acts in a late step after the SAM complex. The MDM10-MDM12-MMM1 subcomplex further acts in the TOM40-specific pathway after the action of the MDM12-MMM1 complex. Essential for establishing and maintaining the structure of mitochondria and maintenance of mtDNA nucleoids.</text>
</comment>
<comment type="subunit">
    <text evidence="1">Component of the ER-mitochondria encounter structure (ERMES) or MDM complex, composed of MMM1, MDM10, MDM12 and MDM34. A MMM1 homodimer associates with one molecule of MDM12 on each side in a pairwise head-to-tail manner, and the SMP-LTD domains of MMM1 and MDM12 generate a continuous hydrophobic tunnel for phospholipid trafficking.</text>
</comment>
<comment type="subcellular location">
    <subcellularLocation>
        <location evidence="1">Mitochondrion outer membrane</location>
        <topology evidence="1">Peripheral membrane protein</topology>
        <orientation evidence="1">Cytoplasmic side</orientation>
    </subcellularLocation>
    <subcellularLocation>
        <location evidence="1">Endoplasmic reticulum membrane</location>
        <topology evidence="1">Peripheral membrane protein</topology>
        <orientation evidence="1">Cytoplasmic side</orientation>
    </subcellularLocation>
    <text evidence="1">The ERMES/MDM complex localizes to a few discrete foci (around 10 per single cell), that represent mitochondria-endoplasmic reticulum junctions. These foci are often found next to mtDNA nucleoids.</text>
</comment>
<comment type="domain">
    <text evidence="1">The SMP-LTD domain is a barrel-like domain that can bind various types of glycerophospholipids in its interior and mediate their transfer between two adjacent bilayers.</text>
</comment>
<comment type="similarity">
    <text evidence="1">Belongs to the MDM12 family.</text>
</comment>
<dbReference type="EMBL" id="AE016816">
    <property type="protein sequence ID" value="AAS51215.2"/>
    <property type="molecule type" value="Genomic_DNA"/>
</dbReference>
<dbReference type="RefSeq" id="NP_983391.2">
    <property type="nucleotide sequence ID" value="NM_208744.2"/>
</dbReference>
<dbReference type="SMR" id="Q75CC2"/>
<dbReference type="FunCoup" id="Q75CC2">
    <property type="interactions" value="72"/>
</dbReference>
<dbReference type="STRING" id="284811.Q75CC2"/>
<dbReference type="EnsemblFungi" id="AAS51215">
    <property type="protein sequence ID" value="AAS51215"/>
    <property type="gene ID" value="AGOS_ACL013C"/>
</dbReference>
<dbReference type="GeneID" id="4619516"/>
<dbReference type="KEGG" id="ago:AGOS_ACL013C"/>
<dbReference type="eggNOG" id="ENOG502QQS2">
    <property type="taxonomic scope" value="Eukaryota"/>
</dbReference>
<dbReference type="HOGENOM" id="CLU_026794_2_0_1"/>
<dbReference type="InParanoid" id="Q75CC2"/>
<dbReference type="OMA" id="AAWPSWI"/>
<dbReference type="OrthoDB" id="3356905at2759"/>
<dbReference type="Proteomes" id="UP000000591">
    <property type="component" value="Chromosome III"/>
</dbReference>
<dbReference type="GO" id="GO:0005789">
    <property type="term" value="C:endoplasmic reticulum membrane"/>
    <property type="evidence" value="ECO:0007669"/>
    <property type="project" value="UniProtKB-SubCell"/>
</dbReference>
<dbReference type="GO" id="GO:0032865">
    <property type="term" value="C:ERMES complex"/>
    <property type="evidence" value="ECO:0000318"/>
    <property type="project" value="GO_Central"/>
</dbReference>
<dbReference type="GO" id="GO:0008289">
    <property type="term" value="F:lipid binding"/>
    <property type="evidence" value="ECO:0007669"/>
    <property type="project" value="UniProtKB-KW"/>
</dbReference>
<dbReference type="GO" id="GO:0120013">
    <property type="term" value="F:lipid transfer activity"/>
    <property type="evidence" value="ECO:0007669"/>
    <property type="project" value="EnsemblFungi"/>
</dbReference>
<dbReference type="GO" id="GO:0015917">
    <property type="term" value="P:aminophospholipid transport"/>
    <property type="evidence" value="ECO:0007669"/>
    <property type="project" value="EnsemblFungi"/>
</dbReference>
<dbReference type="GO" id="GO:0000002">
    <property type="term" value="P:mitochondrial genome maintenance"/>
    <property type="evidence" value="ECO:0007669"/>
    <property type="project" value="UniProtKB-UniRule"/>
</dbReference>
<dbReference type="GO" id="GO:0070096">
    <property type="term" value="P:mitochondrial outer membrane translocase complex assembly"/>
    <property type="evidence" value="ECO:0007669"/>
    <property type="project" value="EnsemblFungi"/>
</dbReference>
<dbReference type="GO" id="GO:0000001">
    <property type="term" value="P:mitochondrion inheritance"/>
    <property type="evidence" value="ECO:0007669"/>
    <property type="project" value="EnsemblFungi"/>
</dbReference>
<dbReference type="GO" id="GO:1990456">
    <property type="term" value="P:mitochondrion-endoplasmic reticulum membrane tethering"/>
    <property type="evidence" value="ECO:0000318"/>
    <property type="project" value="GO_Central"/>
</dbReference>
<dbReference type="GO" id="GO:0007031">
    <property type="term" value="P:peroxisome organization"/>
    <property type="evidence" value="ECO:0007669"/>
    <property type="project" value="EnsemblFungi"/>
</dbReference>
<dbReference type="GO" id="GO:0015914">
    <property type="term" value="P:phospholipid transport"/>
    <property type="evidence" value="ECO:0000318"/>
    <property type="project" value="GO_Central"/>
</dbReference>
<dbReference type="GO" id="GO:0045040">
    <property type="term" value="P:protein insertion into mitochondrial outer membrane"/>
    <property type="evidence" value="ECO:0007669"/>
    <property type="project" value="UniProtKB-UniRule"/>
</dbReference>
<dbReference type="CDD" id="cd21672">
    <property type="entry name" value="SMP_Mdm12"/>
    <property type="match status" value="1"/>
</dbReference>
<dbReference type="HAMAP" id="MF_03104">
    <property type="entry name" value="Mdm12"/>
    <property type="match status" value="1"/>
</dbReference>
<dbReference type="InterPro" id="IPR027532">
    <property type="entry name" value="Mdm12"/>
</dbReference>
<dbReference type="InterPro" id="IPR019411">
    <property type="entry name" value="MMM1_dom"/>
</dbReference>
<dbReference type="InterPro" id="IPR031468">
    <property type="entry name" value="SMP_LBD"/>
</dbReference>
<dbReference type="PANTHER" id="PTHR28204">
    <property type="entry name" value="MITOCHONDRIAL DISTRIBUTION AND MORPHOLOGY PROTEIN 12"/>
    <property type="match status" value="1"/>
</dbReference>
<dbReference type="PANTHER" id="PTHR28204:SF1">
    <property type="entry name" value="MITOCHONDRIAL DISTRIBUTION AND MORPHOLOGY PROTEIN 12"/>
    <property type="match status" value="1"/>
</dbReference>
<dbReference type="Pfam" id="PF10296">
    <property type="entry name" value="MMM1"/>
    <property type="match status" value="1"/>
</dbReference>
<dbReference type="PROSITE" id="PS51847">
    <property type="entry name" value="SMP"/>
    <property type="match status" value="1"/>
</dbReference>
<feature type="chain" id="PRO_0000384267" description="Mitochondrial distribution and morphology protein 12">
    <location>
        <begin position="1"/>
        <end position="264"/>
    </location>
</feature>
<feature type="domain" description="SMP-LTD" evidence="1">
    <location>
        <begin position="1"/>
        <end position="232"/>
    </location>
</feature>
<feature type="region of interest" description="Disordered" evidence="2">
    <location>
        <begin position="240"/>
        <end position="264"/>
    </location>
</feature>
<feature type="compositionally biased region" description="Basic and acidic residues" evidence="2">
    <location>
        <begin position="248"/>
        <end position="264"/>
    </location>
</feature>
<sequence>MSFDINWNKINEDSTINQRARAFLNEHLESLQLPSYVSNIKMTDFKLGTIPPRITLKQIDNPLDDFYEALRLEGASIGGRDTDVQFLMEVDYKGDMLIELSAELVLNYPSPNFMQLPVKLTISDIGIHSLCLVAYLQRQLFISFLCDVSDPALDNVESPLDSNGPAFLGSKAVERISLIRSIKIQTEIGPQDLSEGTILRSVGKLEQFLSDVFKNLLRKEAAWPSWINLDFNEDVSADVESSSSAEESLPHRDDAQDFSADARA</sequence>
<evidence type="ECO:0000255" key="1">
    <source>
        <dbReference type="HAMAP-Rule" id="MF_03104"/>
    </source>
</evidence>
<evidence type="ECO:0000256" key="2">
    <source>
        <dbReference type="SAM" id="MobiDB-lite"/>
    </source>
</evidence>
<organism>
    <name type="scientific">Eremothecium gossypii (strain ATCC 10895 / CBS 109.51 / FGSC 9923 / NRRL Y-1056)</name>
    <name type="common">Yeast</name>
    <name type="synonym">Ashbya gossypii</name>
    <dbReference type="NCBI Taxonomy" id="284811"/>
    <lineage>
        <taxon>Eukaryota</taxon>
        <taxon>Fungi</taxon>
        <taxon>Dikarya</taxon>
        <taxon>Ascomycota</taxon>
        <taxon>Saccharomycotina</taxon>
        <taxon>Saccharomycetes</taxon>
        <taxon>Saccharomycetales</taxon>
        <taxon>Saccharomycetaceae</taxon>
        <taxon>Eremothecium</taxon>
    </lineage>
</organism>
<proteinExistence type="inferred from homology"/>
<name>MDM12_EREGS</name>
<keyword id="KW-0256">Endoplasmic reticulum</keyword>
<keyword id="KW-0445">Lipid transport</keyword>
<keyword id="KW-0446">Lipid-binding</keyword>
<keyword id="KW-0472">Membrane</keyword>
<keyword id="KW-0496">Mitochondrion</keyword>
<keyword id="KW-1000">Mitochondrion outer membrane</keyword>
<keyword id="KW-1185">Reference proteome</keyword>
<keyword id="KW-0813">Transport</keyword>
<accession>Q75CC2</accession>
<reference key="1">
    <citation type="journal article" date="2004" name="Science">
        <title>The Ashbya gossypii genome as a tool for mapping the ancient Saccharomyces cerevisiae genome.</title>
        <authorList>
            <person name="Dietrich F.S."/>
            <person name="Voegeli S."/>
            <person name="Brachat S."/>
            <person name="Lerch A."/>
            <person name="Gates K."/>
            <person name="Steiner S."/>
            <person name="Mohr C."/>
            <person name="Poehlmann R."/>
            <person name="Luedi P."/>
            <person name="Choi S."/>
            <person name="Wing R.A."/>
            <person name="Flavier A."/>
            <person name="Gaffney T.D."/>
            <person name="Philippsen P."/>
        </authorList>
    </citation>
    <scope>NUCLEOTIDE SEQUENCE [LARGE SCALE GENOMIC DNA]</scope>
    <source>
        <strain>ATCC 10895 / CBS 109.51 / FGSC 9923 / NRRL Y-1056</strain>
    </source>
</reference>
<reference key="2">
    <citation type="journal article" date="2013" name="G3 (Bethesda)">
        <title>Genomes of Ashbya fungi isolated from insects reveal four mating-type loci, numerous translocations, lack of transposons, and distinct gene duplications.</title>
        <authorList>
            <person name="Dietrich F.S."/>
            <person name="Voegeli S."/>
            <person name="Kuo S."/>
            <person name="Philippsen P."/>
        </authorList>
    </citation>
    <scope>GENOME REANNOTATION</scope>
    <scope>SEQUENCE REVISION TO 82; 126; 146-147 AND 151</scope>
    <source>
        <strain>ATCC 10895 / CBS 109.51 / FGSC 9923 / NRRL Y-1056</strain>
    </source>
</reference>